<evidence type="ECO:0000255" key="1">
    <source>
        <dbReference type="HAMAP-Rule" id="MF_00377"/>
    </source>
</evidence>
<evidence type="ECO:0000256" key="2">
    <source>
        <dbReference type="SAM" id="MobiDB-lite"/>
    </source>
</evidence>
<evidence type="ECO:0000269" key="3">
    <source>
    </source>
</evidence>
<evidence type="ECO:0000305" key="4"/>
<evidence type="ECO:0000305" key="5">
    <source>
    </source>
</evidence>
<dbReference type="EMBL" id="U17833">
    <property type="protein sequence ID" value="AAC43711.1"/>
    <property type="status" value="ALT_FRAME"/>
    <property type="molecule type" value="Genomic_DNA"/>
</dbReference>
<dbReference type="EMBL" id="CP000480">
    <property type="protein sequence ID" value="ABK76223.1"/>
    <property type="molecule type" value="Genomic_DNA"/>
</dbReference>
<dbReference type="EMBL" id="CP001663">
    <property type="protein sequence ID" value="AFP36486.1"/>
    <property type="molecule type" value="Genomic_DNA"/>
</dbReference>
<dbReference type="RefSeq" id="WP_003898364.1">
    <property type="nucleotide sequence ID" value="NZ_SIJM01000001.1"/>
</dbReference>
<dbReference type="RefSeq" id="YP_891139.1">
    <property type="nucleotide sequence ID" value="NC_008596.1"/>
</dbReference>
<dbReference type="SMR" id="A0R7K1"/>
<dbReference type="STRING" id="246196.MSMEG_6947"/>
<dbReference type="PaxDb" id="246196-MSMEI_0001"/>
<dbReference type="GeneID" id="93461515"/>
<dbReference type="KEGG" id="msb:LJ00_34285"/>
<dbReference type="KEGG" id="msg:MSMEI_0001"/>
<dbReference type="KEGG" id="msm:MSMEG_6947"/>
<dbReference type="PATRIC" id="fig|246196.19.peg.6759"/>
<dbReference type="eggNOG" id="COG0593">
    <property type="taxonomic scope" value="Bacteria"/>
</dbReference>
<dbReference type="OrthoDB" id="9807019at2"/>
<dbReference type="Proteomes" id="UP000000757">
    <property type="component" value="Chromosome"/>
</dbReference>
<dbReference type="Proteomes" id="UP000006158">
    <property type="component" value="Chromosome"/>
</dbReference>
<dbReference type="GO" id="GO:0005737">
    <property type="term" value="C:cytoplasm"/>
    <property type="evidence" value="ECO:0007669"/>
    <property type="project" value="UniProtKB-SubCell"/>
</dbReference>
<dbReference type="GO" id="GO:0005886">
    <property type="term" value="C:plasma membrane"/>
    <property type="evidence" value="ECO:0007669"/>
    <property type="project" value="TreeGrafter"/>
</dbReference>
<dbReference type="GO" id="GO:0005524">
    <property type="term" value="F:ATP binding"/>
    <property type="evidence" value="ECO:0007669"/>
    <property type="project" value="UniProtKB-UniRule"/>
</dbReference>
<dbReference type="GO" id="GO:0016887">
    <property type="term" value="F:ATP hydrolysis activity"/>
    <property type="evidence" value="ECO:0007669"/>
    <property type="project" value="InterPro"/>
</dbReference>
<dbReference type="GO" id="GO:0003688">
    <property type="term" value="F:DNA replication origin binding"/>
    <property type="evidence" value="ECO:0007669"/>
    <property type="project" value="UniProtKB-UniRule"/>
</dbReference>
<dbReference type="GO" id="GO:0008289">
    <property type="term" value="F:lipid binding"/>
    <property type="evidence" value="ECO:0007669"/>
    <property type="project" value="UniProtKB-KW"/>
</dbReference>
<dbReference type="GO" id="GO:0006270">
    <property type="term" value="P:DNA replication initiation"/>
    <property type="evidence" value="ECO:0007669"/>
    <property type="project" value="UniProtKB-UniRule"/>
</dbReference>
<dbReference type="GO" id="GO:0006275">
    <property type="term" value="P:regulation of DNA replication"/>
    <property type="evidence" value="ECO:0007669"/>
    <property type="project" value="UniProtKB-UniRule"/>
</dbReference>
<dbReference type="CDD" id="cd00009">
    <property type="entry name" value="AAA"/>
    <property type="match status" value="1"/>
</dbReference>
<dbReference type="CDD" id="cd06571">
    <property type="entry name" value="Bac_DnaA_C"/>
    <property type="match status" value="1"/>
</dbReference>
<dbReference type="FunFam" id="1.10.1750.10:FF:000002">
    <property type="entry name" value="Chromosomal replication initiator protein DnaA"/>
    <property type="match status" value="1"/>
</dbReference>
<dbReference type="FunFam" id="1.10.8.60:FF:000003">
    <property type="entry name" value="Chromosomal replication initiator protein DnaA"/>
    <property type="match status" value="1"/>
</dbReference>
<dbReference type="FunFam" id="3.40.50.300:FF:000150">
    <property type="entry name" value="Chromosomal replication initiator protein DnaA"/>
    <property type="match status" value="1"/>
</dbReference>
<dbReference type="Gene3D" id="1.10.1750.10">
    <property type="match status" value="1"/>
</dbReference>
<dbReference type="Gene3D" id="1.10.8.60">
    <property type="match status" value="1"/>
</dbReference>
<dbReference type="Gene3D" id="3.30.300.180">
    <property type="match status" value="1"/>
</dbReference>
<dbReference type="Gene3D" id="3.40.50.300">
    <property type="entry name" value="P-loop containing nucleotide triphosphate hydrolases"/>
    <property type="match status" value="1"/>
</dbReference>
<dbReference type="HAMAP" id="MF_00377">
    <property type="entry name" value="DnaA_bact"/>
    <property type="match status" value="1"/>
</dbReference>
<dbReference type="InterPro" id="IPR003593">
    <property type="entry name" value="AAA+_ATPase"/>
</dbReference>
<dbReference type="InterPro" id="IPR001957">
    <property type="entry name" value="Chromosome_initiator_DnaA"/>
</dbReference>
<dbReference type="InterPro" id="IPR020591">
    <property type="entry name" value="Chromosome_initiator_DnaA-like"/>
</dbReference>
<dbReference type="InterPro" id="IPR018312">
    <property type="entry name" value="Chromosome_initiator_DnaA_CS"/>
</dbReference>
<dbReference type="InterPro" id="IPR013159">
    <property type="entry name" value="DnaA_C"/>
</dbReference>
<dbReference type="InterPro" id="IPR013317">
    <property type="entry name" value="DnaA_dom"/>
</dbReference>
<dbReference type="InterPro" id="IPR038454">
    <property type="entry name" value="DnaA_N_sf"/>
</dbReference>
<dbReference type="InterPro" id="IPR027417">
    <property type="entry name" value="P-loop_NTPase"/>
</dbReference>
<dbReference type="InterPro" id="IPR010921">
    <property type="entry name" value="Trp_repressor/repl_initiator"/>
</dbReference>
<dbReference type="NCBIfam" id="TIGR00362">
    <property type="entry name" value="DnaA"/>
    <property type="match status" value="1"/>
</dbReference>
<dbReference type="NCBIfam" id="NF010686">
    <property type="entry name" value="PRK14086.1"/>
    <property type="match status" value="1"/>
</dbReference>
<dbReference type="PANTHER" id="PTHR30050">
    <property type="entry name" value="CHROMOSOMAL REPLICATION INITIATOR PROTEIN DNAA"/>
    <property type="match status" value="1"/>
</dbReference>
<dbReference type="PANTHER" id="PTHR30050:SF2">
    <property type="entry name" value="CHROMOSOMAL REPLICATION INITIATOR PROTEIN DNAA"/>
    <property type="match status" value="1"/>
</dbReference>
<dbReference type="Pfam" id="PF00308">
    <property type="entry name" value="Bac_DnaA"/>
    <property type="match status" value="1"/>
</dbReference>
<dbReference type="Pfam" id="PF08299">
    <property type="entry name" value="Bac_DnaA_C"/>
    <property type="match status" value="1"/>
</dbReference>
<dbReference type="PRINTS" id="PR00051">
    <property type="entry name" value="DNAA"/>
</dbReference>
<dbReference type="SMART" id="SM00382">
    <property type="entry name" value="AAA"/>
    <property type="match status" value="1"/>
</dbReference>
<dbReference type="SMART" id="SM00760">
    <property type="entry name" value="Bac_DnaA_C"/>
    <property type="match status" value="1"/>
</dbReference>
<dbReference type="SUPFAM" id="SSF52540">
    <property type="entry name" value="P-loop containing nucleoside triphosphate hydrolases"/>
    <property type="match status" value="1"/>
</dbReference>
<dbReference type="SUPFAM" id="SSF48295">
    <property type="entry name" value="TrpR-like"/>
    <property type="match status" value="1"/>
</dbReference>
<dbReference type="PROSITE" id="PS01008">
    <property type="entry name" value="DNAA"/>
    <property type="match status" value="1"/>
</dbReference>
<organism>
    <name type="scientific">Mycolicibacterium smegmatis (strain ATCC 700084 / mc(2)155)</name>
    <name type="common">Mycobacterium smegmatis</name>
    <dbReference type="NCBI Taxonomy" id="246196"/>
    <lineage>
        <taxon>Bacteria</taxon>
        <taxon>Bacillati</taxon>
        <taxon>Actinomycetota</taxon>
        <taxon>Actinomycetes</taxon>
        <taxon>Mycobacteriales</taxon>
        <taxon>Mycobacteriaceae</taxon>
        <taxon>Mycolicibacterium</taxon>
    </lineage>
</organism>
<name>DNAA_MYCS2</name>
<gene>
    <name evidence="1" type="primary">dnaA</name>
    <name type="ordered locus">MSMEG_6947</name>
    <name type="ordered locus">MSMEI_0001</name>
</gene>
<accession>A0R7K1</accession>
<accession>I7G121</accession>
<accession>P49992</accession>
<accession>Q59558</accession>
<reference key="1">
    <citation type="journal article" date="1995" name="J. Bacteriol.">
        <title>Mycobacterium smegmatis dnaA region and autonomous replication activity.</title>
        <authorList>
            <person name="Rajagopalan M."/>
            <person name="Qin M.H."/>
            <person name="Nash D.R."/>
            <person name="Madiraju M.V.V.S."/>
        </authorList>
    </citation>
    <scope>NUCLEOTIDE SEQUENCE [GENOMIC DNA]</scope>
    <scope>PROBABLE DNAA BOX SEQUENCE</scope>
    <source>
        <strain>ATCC 700084 / mc(2)155</strain>
    </source>
</reference>
<reference key="2">
    <citation type="submission" date="2006-10" db="EMBL/GenBank/DDBJ databases">
        <authorList>
            <person name="Fleischmann R.D."/>
            <person name="Dodson R.J."/>
            <person name="Haft D.H."/>
            <person name="Merkel J.S."/>
            <person name="Nelson W.C."/>
            <person name="Fraser C.M."/>
        </authorList>
    </citation>
    <scope>NUCLEOTIDE SEQUENCE [LARGE SCALE GENOMIC DNA]</scope>
    <source>
        <strain>ATCC 700084 / mc(2)155</strain>
    </source>
</reference>
<reference key="3">
    <citation type="journal article" date="2007" name="Genome Biol.">
        <title>Interrupted coding sequences in Mycobacterium smegmatis: authentic mutations or sequencing errors?</title>
        <authorList>
            <person name="Deshayes C."/>
            <person name="Perrodou E."/>
            <person name="Gallien S."/>
            <person name="Euphrasie D."/>
            <person name="Schaeffer C."/>
            <person name="Van-Dorsselaer A."/>
            <person name="Poch O."/>
            <person name="Lecompte O."/>
            <person name="Reyrat J.-M."/>
        </authorList>
    </citation>
    <scope>NUCLEOTIDE SEQUENCE [LARGE SCALE GENOMIC DNA]</scope>
    <source>
        <strain>ATCC 700084 / mc(2)155</strain>
    </source>
</reference>
<reference key="4">
    <citation type="journal article" date="2009" name="Genome Res.">
        <title>Ortho-proteogenomics: multiple proteomes investigation through orthology and a new MS-based protocol.</title>
        <authorList>
            <person name="Gallien S."/>
            <person name="Perrodou E."/>
            <person name="Carapito C."/>
            <person name="Deshayes C."/>
            <person name="Reyrat J.-M."/>
            <person name="Van Dorsselaer A."/>
            <person name="Poch O."/>
            <person name="Schaeffer C."/>
            <person name="Lecompte O."/>
        </authorList>
    </citation>
    <scope>NUCLEOTIDE SEQUENCE [LARGE SCALE GENOMIC DNA]</scope>
    <source>
        <strain>ATCC 700084 / mc(2)155</strain>
    </source>
</reference>
<reference key="5">
    <citation type="journal article" date="2012" name="J. Biol. Chem.">
        <title>Septal localization of the Mycobacterium tuberculosis MtrB sensor kinase promotes MtrA regulon expression.</title>
        <authorList>
            <person name="Plocinska R."/>
            <person name="Purushotham G."/>
            <person name="Sarva K."/>
            <person name="Vadrevu I.S."/>
            <person name="Pandeeti E.V."/>
            <person name="Arora N."/>
            <person name="Plocinski P."/>
            <person name="Madiraju M.V."/>
            <person name="Rajagopalan M."/>
        </authorList>
    </citation>
    <scope>INDUCTION</scope>
    <source>
        <strain>ATCC 700084 / mc(2)155</strain>
    </source>
</reference>
<keyword id="KW-0067">ATP-binding</keyword>
<keyword id="KW-0963">Cytoplasm</keyword>
<keyword id="KW-0235">DNA replication</keyword>
<keyword id="KW-0238">DNA-binding</keyword>
<keyword id="KW-0446">Lipid-binding</keyword>
<keyword id="KW-0547">Nucleotide-binding</keyword>
<keyword id="KW-1185">Reference proteome</keyword>
<comment type="function">
    <text evidence="1">Plays an essential role in the initiation and regulation of chromosomal replication. ATP-DnaA binds to the origin of replication (oriC) to initiate formation of the DNA replication initiation complex once per cell cycle. Binds the DnaA box (a 9 base pair repeat at the origin) and separates the double-stranded (ds)DNA. Forms a right-handed helical filament on oriC DNA; dsDNA binds to the exterior of the filament while single-stranded (ss)DNA is stabiized in the filament's interior. The ATP-DnaA-oriC complex binds and stabilizes one strand of the AT-rich DNA unwinding element (DUE), permitting loading of DNA polymerase. After initiation quickly degrades to an ADP-DnaA complex that is not apt for DNA replication. Binds acidic phospholipids.</text>
</comment>
<comment type="function">
    <text evidence="5">The probable consensus sequence for the DnaA box of this bacterium is 5'-TT(G/C)TCCACA-3' (Probable).</text>
</comment>
<comment type="subunit">
    <text evidence="1">Oligomerizes as a right-handed, spiral filament on DNA at oriC.</text>
</comment>
<comment type="subcellular location">
    <subcellularLocation>
        <location evidence="1">Cytoplasm</location>
    </subcellularLocation>
</comment>
<comment type="induction">
    <text evidence="3">Expression depends on the two-component regulatory system MtrA/MtrB.</text>
</comment>
<comment type="domain">
    <text evidence="1">Domain I is involved in oligomerization and binding regulators, domain II is flexibile and of varying length in different bacteria, domain III forms the AAA+ region, while domain IV binds dsDNA.</text>
</comment>
<comment type="similarity">
    <text evidence="1 4">Belongs to the DnaA family.</text>
</comment>
<comment type="sequence caution" evidence="4">
    <conflict type="frameshift">
        <sequence resource="EMBL-CDS" id="AAC43711"/>
    </conflict>
</comment>
<protein>
    <recommendedName>
        <fullName evidence="1">Chromosomal replication initiator protein DnaA</fullName>
    </recommendedName>
</protein>
<sequence length="504" mass="56664">MTADPDPPFVAVWNSVVAELNGDVNGDRQGDPSLPVLTPQQRAWLKLVKPLVIAEGFALLSVPTPFVQNEIERHLREPIVTALSRKLGQRVELGVRIATPTDEPEDAPDSFADSPAPASVPAGPADADEIDDDRDARVNAQESWPKYFSRPEPDTSSDDSNAVNLNRRYTFDTFVIGASNRFAHAATLAIAEAPARAYNPLFIWGESGLGKTHLLHAAGNYAQRLFPGMRVKYVSTEEFTNDFINSLRDDRKASFKRSYRDIDILLVDDIQFIEGKEGIQEEFFHTFNTLHNSNKQIVISSDRPPKQLATLEDRLRTRFEWGLITDVQPPELETRIAILRKKAQMDRLDVPDDVLELIASSIERNIRELEGALIRVTAFASLNKTRIDRSLAEVVLRDLIADATTMQISTAAIMAVTAEYFETTVEELRGPGKTRALAQSRQIAMYLCRELTDLSLPKIGQAFGRDHTTVMYAEKKIRGEMAERREVFDHVKELTTRIRQRAKR</sequence>
<proteinExistence type="evidence at transcript level"/>
<feature type="chain" id="PRO_0000293597" description="Chromosomal replication initiator protein DnaA">
    <location>
        <begin position="1"/>
        <end position="504"/>
    </location>
</feature>
<feature type="region of interest" description="Domain I, interacts with DnaA modulators" evidence="1">
    <location>
        <begin position="1"/>
        <end position="109"/>
    </location>
</feature>
<feature type="region of interest" description="Disordered" evidence="2">
    <location>
        <begin position="98"/>
        <end position="162"/>
    </location>
</feature>
<feature type="region of interest" description="Domain II" evidence="1">
    <location>
        <begin position="110"/>
        <end position="163"/>
    </location>
</feature>
<feature type="region of interest" description="Domain III, AAA+ region" evidence="1">
    <location>
        <begin position="164"/>
        <end position="380"/>
    </location>
</feature>
<feature type="region of interest" description="Domain IV, binds dsDNA" evidence="1">
    <location>
        <begin position="381"/>
        <end position="504"/>
    </location>
</feature>
<feature type="compositionally biased region" description="Low complexity" evidence="2">
    <location>
        <begin position="109"/>
        <end position="125"/>
    </location>
</feature>
<feature type="binding site" evidence="1">
    <location>
        <position position="208"/>
    </location>
    <ligand>
        <name>ATP</name>
        <dbReference type="ChEBI" id="CHEBI:30616"/>
    </ligand>
</feature>
<feature type="binding site" evidence="1">
    <location>
        <position position="210"/>
    </location>
    <ligand>
        <name>ATP</name>
        <dbReference type="ChEBI" id="CHEBI:30616"/>
    </ligand>
</feature>
<feature type="binding site" evidence="1">
    <location>
        <position position="211"/>
    </location>
    <ligand>
        <name>ATP</name>
        <dbReference type="ChEBI" id="CHEBI:30616"/>
    </ligand>
</feature>
<feature type="binding site" evidence="1">
    <location>
        <position position="212"/>
    </location>
    <ligand>
        <name>ATP</name>
        <dbReference type="ChEBI" id="CHEBI:30616"/>
    </ligand>
</feature>
<feature type="sequence conflict" description="In Ref. 1; AAC43711." evidence="4" ref="1">
    <original>A</original>
    <variation>H</variation>
    <location>
        <position position="218"/>
    </location>
</feature>
<feature type="sequence conflict" description="In Ref. 1; AAC43711." evidence="4" ref="1">
    <original>V</original>
    <variation>A</variation>
    <location>
        <position position="234"/>
    </location>
</feature>
<feature type="sequence conflict" description="In Ref. 1; AAC43711." evidence="4" ref="1">
    <original>L</original>
    <variation>F</variation>
    <location>
        <position position="315"/>
    </location>
</feature>
<feature type="sequence conflict" description="In Ref. 1; AAC43711." evidence="4" ref="1">
    <original>L</original>
    <variation>M</variation>
    <location>
        <position position="447"/>
    </location>
</feature>